<name>NP1L3_MOUSE</name>
<organism>
    <name type="scientific">Mus musculus</name>
    <name type="common">Mouse</name>
    <dbReference type="NCBI Taxonomy" id="10090"/>
    <lineage>
        <taxon>Eukaryota</taxon>
        <taxon>Metazoa</taxon>
        <taxon>Chordata</taxon>
        <taxon>Craniata</taxon>
        <taxon>Vertebrata</taxon>
        <taxon>Euteleostomi</taxon>
        <taxon>Mammalia</taxon>
        <taxon>Eutheria</taxon>
        <taxon>Euarchontoglires</taxon>
        <taxon>Glires</taxon>
        <taxon>Rodentia</taxon>
        <taxon>Myomorpha</taxon>
        <taxon>Muroidea</taxon>
        <taxon>Muridae</taxon>
        <taxon>Murinae</taxon>
        <taxon>Mus</taxon>
        <taxon>Mus</taxon>
    </lineage>
</organism>
<evidence type="ECO:0000256" key="1">
    <source>
        <dbReference type="SAM" id="MobiDB-lite"/>
    </source>
</evidence>
<evidence type="ECO:0000269" key="2">
    <source>
    </source>
</evidence>
<evidence type="ECO:0000305" key="3"/>
<proteinExistence type="evidence at transcript level"/>
<protein>
    <recommendedName>
        <fullName>Nucleosome assembly protein 1-like 3</fullName>
    </recommendedName>
    <alternativeName>
        <fullName>Brain-specific protein MB20</fullName>
    </alternativeName>
</protein>
<keyword id="KW-0963">Cytoplasm</keyword>
<keyword id="KW-0539">Nucleus</keyword>
<keyword id="KW-1185">Reference proteome</keyword>
<accession>Q794H2</accession>
<accession>B1AZU8</accession>
<accession>O54802</accession>
<feature type="chain" id="PRO_0000236211" description="Nucleosome assembly protein 1-like 3">
    <location>
        <begin position="1"/>
        <end position="544"/>
    </location>
</feature>
<feature type="region of interest" description="Disordered" evidence="1">
    <location>
        <begin position="1"/>
        <end position="109"/>
    </location>
</feature>
<feature type="region of interest" description="Disordered" evidence="1">
    <location>
        <begin position="168"/>
        <end position="345"/>
    </location>
</feature>
<feature type="compositionally biased region" description="Low complexity" evidence="1">
    <location>
        <begin position="35"/>
        <end position="83"/>
    </location>
</feature>
<feature type="compositionally biased region" description="Acidic residues" evidence="1">
    <location>
        <begin position="168"/>
        <end position="192"/>
    </location>
</feature>
<feature type="compositionally biased region" description="Basic and acidic residues" evidence="1">
    <location>
        <begin position="207"/>
        <end position="228"/>
    </location>
</feature>
<feature type="compositionally biased region" description="Basic and acidic residues" evidence="1">
    <location>
        <begin position="235"/>
        <end position="277"/>
    </location>
</feature>
<feature type="compositionally biased region" description="Basic and acidic residues" evidence="1">
    <location>
        <begin position="314"/>
        <end position="332"/>
    </location>
</feature>
<dbReference type="EMBL" id="AB010711">
    <property type="protein sequence ID" value="BAA24570.1"/>
    <property type="molecule type" value="mRNA"/>
</dbReference>
<dbReference type="EMBL" id="BX005467">
    <property type="status" value="NOT_ANNOTATED_CDS"/>
    <property type="molecule type" value="Genomic_DNA"/>
</dbReference>
<dbReference type="EMBL" id="BC020176">
    <property type="protein sequence ID" value="AAH20176.1"/>
    <property type="molecule type" value="mRNA"/>
</dbReference>
<dbReference type="EMBL" id="BC027045">
    <property type="protein sequence ID" value="AAH27045.1"/>
    <property type="molecule type" value="mRNA"/>
</dbReference>
<dbReference type="CCDS" id="CCDS30372.1"/>
<dbReference type="RefSeq" id="NP_620081.1">
    <property type="nucleotide sequence ID" value="NM_138742.1"/>
</dbReference>
<dbReference type="SMR" id="Q794H2"/>
<dbReference type="BioGRID" id="207676">
    <property type="interactions" value="3"/>
</dbReference>
<dbReference type="FunCoup" id="Q794H2">
    <property type="interactions" value="187"/>
</dbReference>
<dbReference type="STRING" id="10090.ENSMUSP00000078453"/>
<dbReference type="iPTMnet" id="Q794H2"/>
<dbReference type="PhosphoSitePlus" id="Q794H2"/>
<dbReference type="PaxDb" id="10090-ENSMUSP00000078453"/>
<dbReference type="ProteomicsDB" id="252999"/>
<dbReference type="Antibodypedia" id="14445">
    <property type="antibodies" value="137 antibodies from 18 providers"/>
</dbReference>
<dbReference type="DNASU" id="54561"/>
<dbReference type="Ensembl" id="ENSMUST00000079490.6">
    <property type="protein sequence ID" value="ENSMUSP00000078453.5"/>
    <property type="gene ID" value="ENSMUSG00000055733.7"/>
</dbReference>
<dbReference type="GeneID" id="54561"/>
<dbReference type="KEGG" id="mmu:54561"/>
<dbReference type="UCSC" id="uc009uel.1">
    <property type="organism name" value="mouse"/>
</dbReference>
<dbReference type="AGR" id="MGI:1859565"/>
<dbReference type="CTD" id="4675"/>
<dbReference type="MGI" id="MGI:1859565">
    <property type="gene designation" value="Nap1l3"/>
</dbReference>
<dbReference type="VEuPathDB" id="HostDB:ENSMUSG00000055733"/>
<dbReference type="eggNOG" id="KOG1507">
    <property type="taxonomic scope" value="Eukaryota"/>
</dbReference>
<dbReference type="GeneTree" id="ENSGT00940000162927"/>
<dbReference type="HOGENOM" id="CLU_038841_0_0_1"/>
<dbReference type="InParanoid" id="Q794H2"/>
<dbReference type="OMA" id="GKDYGNR"/>
<dbReference type="OrthoDB" id="27325at2759"/>
<dbReference type="PhylomeDB" id="Q794H2"/>
<dbReference type="TreeFam" id="TF314349"/>
<dbReference type="BioGRID-ORCS" id="54561">
    <property type="hits" value="4 hits in 78 CRISPR screens"/>
</dbReference>
<dbReference type="PRO" id="PR:Q794H2"/>
<dbReference type="Proteomes" id="UP000000589">
    <property type="component" value="Chromosome X"/>
</dbReference>
<dbReference type="RNAct" id="Q794H2">
    <property type="molecule type" value="protein"/>
</dbReference>
<dbReference type="Bgee" id="ENSMUSG00000055733">
    <property type="expression patterns" value="Expressed in dorsomedial nucleus of hypothalamus and 197 other cell types or tissues"/>
</dbReference>
<dbReference type="GO" id="GO:0005737">
    <property type="term" value="C:cytoplasm"/>
    <property type="evidence" value="ECO:0007669"/>
    <property type="project" value="UniProtKB-SubCell"/>
</dbReference>
<dbReference type="GO" id="GO:0005634">
    <property type="term" value="C:nucleus"/>
    <property type="evidence" value="ECO:0007669"/>
    <property type="project" value="UniProtKB-SubCell"/>
</dbReference>
<dbReference type="GO" id="GO:0006334">
    <property type="term" value="P:nucleosome assembly"/>
    <property type="evidence" value="ECO:0007669"/>
    <property type="project" value="InterPro"/>
</dbReference>
<dbReference type="FunFam" id="1.20.5.1500:FF:000001">
    <property type="entry name" value="Nucleosome assembly protein 1-like 1"/>
    <property type="match status" value="1"/>
</dbReference>
<dbReference type="FunFam" id="3.30.1120.90:FF:000001">
    <property type="entry name" value="Nucleosome assembly protein 1-like 1"/>
    <property type="match status" value="1"/>
</dbReference>
<dbReference type="Gene3D" id="1.20.5.1500">
    <property type="match status" value="1"/>
</dbReference>
<dbReference type="Gene3D" id="3.30.1120.90">
    <property type="entry name" value="Nucleosome assembly protein"/>
    <property type="match status" value="1"/>
</dbReference>
<dbReference type="InterPro" id="IPR037231">
    <property type="entry name" value="NAP-like_sf"/>
</dbReference>
<dbReference type="InterPro" id="IPR002164">
    <property type="entry name" value="NAP_family"/>
</dbReference>
<dbReference type="PANTHER" id="PTHR11875">
    <property type="entry name" value="TESTIS-SPECIFIC Y-ENCODED PROTEIN"/>
    <property type="match status" value="1"/>
</dbReference>
<dbReference type="Pfam" id="PF00956">
    <property type="entry name" value="NAP"/>
    <property type="match status" value="1"/>
</dbReference>
<dbReference type="SUPFAM" id="SSF143113">
    <property type="entry name" value="NAP-like"/>
    <property type="match status" value="1"/>
</dbReference>
<comment type="subcellular location">
    <subcellularLocation>
        <location evidence="2">Nucleus</location>
    </subcellularLocation>
    <subcellularLocation>
        <location evidence="2">Cytoplasm</location>
    </subcellularLocation>
</comment>
<comment type="tissue specificity">
    <text evidence="2">Expressed in brain.</text>
</comment>
<comment type="similarity">
    <text evidence="3">Belongs to the nucleosome assembly protein (NAP) family.</text>
</comment>
<sequence length="544" mass="61377">MAEADPKMVTEPGAHGVAEEAMASTACDSGDESDSNSSSSTNSCSSSGSSSSGSSSSSSSSSSSSSSSSSSSSGSSGSSSNGSHLNRKKRVPEPSRRAQRRPSGKLFLDKLPQAVRNRVQALRNIQNECDKVDTLFLRAIHDLERKYAELNKPLYDKRFQIINAEYEPTEEECEWNSEEEFSGDEEMQDDTPNEMPPLEGEEEEESCNEKAEVKEEGTHVPEEVPEAKVEEEEAPKETPEVKTEEKDIPKEGAEEKAEEQESSKEIPEVKGEEKADSTDCIDIAPEEKEDVKEVTQANTENKDQPTEEFTPRAPAREAQKRVPETRPEEGVNIKRARKGKPKKEDPKGIPDYWLTVLKNVDKLGPMIQKCDEPILKFLSDVSLKFSNPGQPIGYTFEFHFLPNPYFRNELLMKTYIIRSKPDHYDPFFAWGWEIEECKGCKIDWRRGKDVTVTTTRSRPGITGEIEVQPRVVPNASFFNFFSPPEIPLIGKLEPREDAILDEDFEIGQILHDNVILKSIYYFTGEINDPYYHDFRDYGNRKYYK</sequence>
<reference key="1">
    <citation type="journal article" date="2001" name="Genomics">
        <title>Identification and characterization of a SET/NAP protein encoded by a brain-specific gene, MB20.</title>
        <authorList>
            <person name="Shen H.H."/>
            <person name="Huang A.M."/>
            <person name="Hoheisel J."/>
            <person name="Tsai S.F."/>
        </authorList>
    </citation>
    <scope>NUCLEOTIDE SEQUENCE [GENOMIC DNA]</scope>
    <scope>SUBCELLULAR LOCATION</scope>
    <scope>TISSUE SPECIFICITY</scope>
    <source>
        <tissue>Brain</tissue>
    </source>
</reference>
<reference key="2">
    <citation type="journal article" date="2009" name="PLoS Biol.">
        <title>Lineage-specific biology revealed by a finished genome assembly of the mouse.</title>
        <authorList>
            <person name="Church D.M."/>
            <person name="Goodstadt L."/>
            <person name="Hillier L.W."/>
            <person name="Zody M.C."/>
            <person name="Goldstein S."/>
            <person name="She X."/>
            <person name="Bult C.J."/>
            <person name="Agarwala R."/>
            <person name="Cherry J.L."/>
            <person name="DiCuccio M."/>
            <person name="Hlavina W."/>
            <person name="Kapustin Y."/>
            <person name="Meric P."/>
            <person name="Maglott D."/>
            <person name="Birtle Z."/>
            <person name="Marques A.C."/>
            <person name="Graves T."/>
            <person name="Zhou S."/>
            <person name="Teague B."/>
            <person name="Potamousis K."/>
            <person name="Churas C."/>
            <person name="Place M."/>
            <person name="Herschleb J."/>
            <person name="Runnheim R."/>
            <person name="Forrest D."/>
            <person name="Amos-Landgraf J."/>
            <person name="Schwartz D.C."/>
            <person name="Cheng Z."/>
            <person name="Lindblad-Toh K."/>
            <person name="Eichler E.E."/>
            <person name="Ponting C.P."/>
        </authorList>
    </citation>
    <scope>NUCLEOTIDE SEQUENCE [LARGE SCALE GENOMIC DNA]</scope>
    <source>
        <strain>C57BL/6J</strain>
    </source>
</reference>
<reference key="3">
    <citation type="journal article" date="2004" name="Genome Res.">
        <title>The status, quality, and expansion of the NIH full-length cDNA project: the Mammalian Gene Collection (MGC).</title>
        <authorList>
            <consortium name="The MGC Project Team"/>
        </authorList>
    </citation>
    <scope>NUCLEOTIDE SEQUENCE [LARGE SCALE MRNA]</scope>
    <source>
        <tissue>Eye</tissue>
    </source>
</reference>
<gene>
    <name type="primary">Nap1l3</name>
    <name type="synonym">Mb20</name>
</gene>